<reference key="1">
    <citation type="submission" date="2000-07" db="EMBL/GenBank/DDBJ databases">
        <title>Molecular cloning and complementation studies of the fission yeast genes encoding subunits Rpa12 and Rpa49 specific for nuclear RNA polymerase I.</title>
        <authorList>
            <person name="Shematorova E.K."/>
            <person name="Shpakovski G.V."/>
        </authorList>
    </citation>
    <scope>NUCLEOTIDE SEQUENCE [MRNA]</scope>
    <source>
        <strain>972 / ATCC 24843</strain>
    </source>
</reference>
<reference key="2">
    <citation type="journal article" date="2002" name="Nature">
        <title>The genome sequence of Schizosaccharomyces pombe.</title>
        <authorList>
            <person name="Wood V."/>
            <person name="Gwilliam R."/>
            <person name="Rajandream M.A."/>
            <person name="Lyne M.H."/>
            <person name="Lyne R."/>
            <person name="Stewart A."/>
            <person name="Sgouros J.G."/>
            <person name="Peat N."/>
            <person name="Hayles J."/>
            <person name="Baker S.G."/>
            <person name="Basham D."/>
            <person name="Bowman S."/>
            <person name="Brooks K."/>
            <person name="Brown D."/>
            <person name="Brown S."/>
            <person name="Chillingworth T."/>
            <person name="Churcher C.M."/>
            <person name="Collins M."/>
            <person name="Connor R."/>
            <person name="Cronin A."/>
            <person name="Davis P."/>
            <person name="Feltwell T."/>
            <person name="Fraser A."/>
            <person name="Gentles S."/>
            <person name="Goble A."/>
            <person name="Hamlin N."/>
            <person name="Harris D.E."/>
            <person name="Hidalgo J."/>
            <person name="Hodgson G."/>
            <person name="Holroyd S."/>
            <person name="Hornsby T."/>
            <person name="Howarth S."/>
            <person name="Huckle E.J."/>
            <person name="Hunt S."/>
            <person name="Jagels K."/>
            <person name="James K.D."/>
            <person name="Jones L."/>
            <person name="Jones M."/>
            <person name="Leather S."/>
            <person name="McDonald S."/>
            <person name="McLean J."/>
            <person name="Mooney P."/>
            <person name="Moule S."/>
            <person name="Mungall K.L."/>
            <person name="Murphy L.D."/>
            <person name="Niblett D."/>
            <person name="Odell C."/>
            <person name="Oliver K."/>
            <person name="O'Neil S."/>
            <person name="Pearson D."/>
            <person name="Quail M.A."/>
            <person name="Rabbinowitsch E."/>
            <person name="Rutherford K.M."/>
            <person name="Rutter S."/>
            <person name="Saunders D."/>
            <person name="Seeger K."/>
            <person name="Sharp S."/>
            <person name="Skelton J."/>
            <person name="Simmonds M.N."/>
            <person name="Squares R."/>
            <person name="Squares S."/>
            <person name="Stevens K."/>
            <person name="Taylor K."/>
            <person name="Taylor R.G."/>
            <person name="Tivey A."/>
            <person name="Walsh S.V."/>
            <person name="Warren T."/>
            <person name="Whitehead S."/>
            <person name="Woodward J.R."/>
            <person name="Volckaert G."/>
            <person name="Aert R."/>
            <person name="Robben J."/>
            <person name="Grymonprez B."/>
            <person name="Weltjens I."/>
            <person name="Vanstreels E."/>
            <person name="Rieger M."/>
            <person name="Schaefer M."/>
            <person name="Mueller-Auer S."/>
            <person name="Gabel C."/>
            <person name="Fuchs M."/>
            <person name="Duesterhoeft A."/>
            <person name="Fritzc C."/>
            <person name="Holzer E."/>
            <person name="Moestl D."/>
            <person name="Hilbert H."/>
            <person name="Borzym K."/>
            <person name="Langer I."/>
            <person name="Beck A."/>
            <person name="Lehrach H."/>
            <person name="Reinhardt R."/>
            <person name="Pohl T.M."/>
            <person name="Eger P."/>
            <person name="Zimmermann W."/>
            <person name="Wedler H."/>
            <person name="Wambutt R."/>
            <person name="Purnelle B."/>
            <person name="Goffeau A."/>
            <person name="Cadieu E."/>
            <person name="Dreano S."/>
            <person name="Gloux S."/>
            <person name="Lelaure V."/>
            <person name="Mottier S."/>
            <person name="Galibert F."/>
            <person name="Aves S.J."/>
            <person name="Xiang Z."/>
            <person name="Hunt C."/>
            <person name="Moore K."/>
            <person name="Hurst S.M."/>
            <person name="Lucas M."/>
            <person name="Rochet M."/>
            <person name="Gaillardin C."/>
            <person name="Tallada V.A."/>
            <person name="Garzon A."/>
            <person name="Thode G."/>
            <person name="Daga R.R."/>
            <person name="Cruzado L."/>
            <person name="Jimenez J."/>
            <person name="Sanchez M."/>
            <person name="del Rey F."/>
            <person name="Benito J."/>
            <person name="Dominguez A."/>
            <person name="Revuelta J.L."/>
            <person name="Moreno S."/>
            <person name="Armstrong J."/>
            <person name="Forsburg S.L."/>
            <person name="Cerutti L."/>
            <person name="Lowe T."/>
            <person name="McCombie W.R."/>
            <person name="Paulsen I."/>
            <person name="Potashkin J."/>
            <person name="Shpakovski G.V."/>
            <person name="Ussery D."/>
            <person name="Barrell B.G."/>
            <person name="Nurse P."/>
        </authorList>
    </citation>
    <scope>NUCLEOTIDE SEQUENCE [LARGE SCALE GENOMIC DNA]</scope>
    <source>
        <strain>972 / ATCC 24843</strain>
    </source>
</reference>
<sequence>MAGDELKGKKRKYRDSHSGDEKSVKILPLSESSLPPLVTTISGFYPPENTRFQLLKKSNQSNRDASLIGRTERVQFEAKNQSTATVEANYCLAVADKTGRVKKIVPAKYLNTFERNILALQEKDKFLKKKHGTVSGTVMEQRANLGLAFGTRKSQKAIMEESANRVKAETLGDVKDQLVSNVQKATEALPTQEDIAAAQAQDRPIPPVNVGAESIEDAYKLEDIIPKEEFSAIYIKPLLENPDERNWAKLLPYRHSLFINERFQRLLSIEEVDQKRARILYYISLLQAFLFSRRSVGNRETLRKKLADPPEILIDGLIKRFTQTTGIGSVQVSSREVDKIICYILVLCLIVDNYSTDVLTLANDLNVKTMKANELFRTVGCRIMAYTETQRMALGLNKTDAKNHKRAVLKIPLEFPKPRRGRARN</sequence>
<name>RPA49_SCHPO</name>
<evidence type="ECO:0000250" key="1"/>
<evidence type="ECO:0000256" key="2">
    <source>
        <dbReference type="SAM" id="MobiDB-lite"/>
    </source>
</evidence>
<evidence type="ECO:0000305" key="3"/>
<accession>O14086</accession>
<protein>
    <recommendedName>
        <fullName>DNA-directed RNA polymerase I subunit rpa49</fullName>
        <shortName>RNA polymerase I subunit A49</shortName>
    </recommendedName>
    <alternativeName>
        <fullName>DNA-directed RNA polymerase I 49 kDa polypeptide</fullName>
    </alternativeName>
</protein>
<dbReference type="EMBL" id="AJ278613">
    <property type="protein sequence ID" value="CAC20964.1"/>
    <property type="molecule type" value="mRNA"/>
</dbReference>
<dbReference type="EMBL" id="CU329670">
    <property type="protein sequence ID" value="CAB16261.1"/>
    <property type="molecule type" value="Genomic_DNA"/>
</dbReference>
<dbReference type="PIR" id="T38536">
    <property type="entry name" value="T38536"/>
</dbReference>
<dbReference type="RefSeq" id="NP_594382.1">
    <property type="nucleotide sequence ID" value="NM_001019803.2"/>
</dbReference>
<dbReference type="SMR" id="O14086"/>
<dbReference type="BioGRID" id="278404">
    <property type="interactions" value="11"/>
</dbReference>
<dbReference type="FunCoup" id="O14086">
    <property type="interactions" value="219"/>
</dbReference>
<dbReference type="STRING" id="284812.O14086"/>
<dbReference type="iPTMnet" id="O14086"/>
<dbReference type="PaxDb" id="4896-SPAC2F3.03c.1"/>
<dbReference type="EnsemblFungi" id="SPAC2F3.03c.1">
    <property type="protein sequence ID" value="SPAC2F3.03c.1:pep"/>
    <property type="gene ID" value="SPAC2F3.03c"/>
</dbReference>
<dbReference type="GeneID" id="2541914"/>
<dbReference type="KEGG" id="spo:2541914"/>
<dbReference type="PomBase" id="SPAC2F3.03c">
    <property type="gene designation" value="rpa49"/>
</dbReference>
<dbReference type="VEuPathDB" id="FungiDB:SPAC2F3.03c"/>
<dbReference type="eggNOG" id="KOG4183">
    <property type="taxonomic scope" value="Eukaryota"/>
</dbReference>
<dbReference type="HOGENOM" id="CLU_034953_2_1_1"/>
<dbReference type="InParanoid" id="O14086"/>
<dbReference type="OMA" id="DVYPFDE"/>
<dbReference type="PhylomeDB" id="O14086"/>
<dbReference type="Reactome" id="R-SPO-73762">
    <property type="pathway name" value="RNA Polymerase I Transcription Initiation"/>
</dbReference>
<dbReference type="Reactome" id="R-SPO-73772">
    <property type="pathway name" value="RNA Polymerase I Promoter Escape"/>
</dbReference>
<dbReference type="PRO" id="PR:O14086"/>
<dbReference type="Proteomes" id="UP000002485">
    <property type="component" value="Chromosome I"/>
</dbReference>
<dbReference type="GO" id="GO:0005730">
    <property type="term" value="C:nucleolus"/>
    <property type="evidence" value="ECO:0007005"/>
    <property type="project" value="PomBase"/>
</dbReference>
<dbReference type="GO" id="GO:0005634">
    <property type="term" value="C:nucleus"/>
    <property type="evidence" value="ECO:0007005"/>
    <property type="project" value="PomBase"/>
</dbReference>
<dbReference type="GO" id="GO:0005736">
    <property type="term" value="C:RNA polymerase I complex"/>
    <property type="evidence" value="ECO:0000314"/>
    <property type="project" value="PomBase"/>
</dbReference>
<dbReference type="GO" id="GO:0003677">
    <property type="term" value="F:DNA binding"/>
    <property type="evidence" value="ECO:0007669"/>
    <property type="project" value="InterPro"/>
</dbReference>
<dbReference type="GO" id="GO:0001188">
    <property type="term" value="P:RNA polymerase I preinitiation complex assembly"/>
    <property type="evidence" value="ECO:0000318"/>
    <property type="project" value="GO_Central"/>
</dbReference>
<dbReference type="GO" id="GO:0006362">
    <property type="term" value="P:transcription elongation by RNA polymerase I"/>
    <property type="evidence" value="ECO:0000314"/>
    <property type="project" value="PomBase"/>
</dbReference>
<dbReference type="InterPro" id="IPR009668">
    <property type="entry name" value="RNA_pol-assoc_fac_A49-like"/>
</dbReference>
<dbReference type="PANTHER" id="PTHR14440">
    <property type="entry name" value="DNA-DIRECTED RNA POLYMERASE I SUBUNIT RPA49"/>
    <property type="match status" value="1"/>
</dbReference>
<dbReference type="Pfam" id="PF06870">
    <property type="entry name" value="RNA_pol_I_A49"/>
    <property type="match status" value="1"/>
</dbReference>
<organism>
    <name type="scientific">Schizosaccharomyces pombe (strain 972 / ATCC 24843)</name>
    <name type="common">Fission yeast</name>
    <dbReference type="NCBI Taxonomy" id="284812"/>
    <lineage>
        <taxon>Eukaryota</taxon>
        <taxon>Fungi</taxon>
        <taxon>Dikarya</taxon>
        <taxon>Ascomycota</taxon>
        <taxon>Taphrinomycotina</taxon>
        <taxon>Schizosaccharomycetes</taxon>
        <taxon>Schizosaccharomycetales</taxon>
        <taxon>Schizosaccharomycetaceae</taxon>
        <taxon>Schizosaccharomyces</taxon>
    </lineage>
</organism>
<gene>
    <name type="primary">rpa49</name>
    <name type="ORF">SPAC2F3.03c</name>
</gene>
<keyword id="KW-0240">DNA-directed RNA polymerase</keyword>
<keyword id="KW-0539">Nucleus</keyword>
<keyword id="KW-1185">Reference proteome</keyword>
<keyword id="KW-0804">Transcription</keyword>
<proteinExistence type="evidence at transcript level"/>
<comment type="function">
    <text>DNA-dependent RNA polymerase catalyzes the transcription of DNA into RNA using the four ribonucleoside triphosphates as substrates. Component of RNA polymerase I which synthesizes ribosomal RNA precursors.</text>
</comment>
<comment type="subunit">
    <text evidence="1">Component of the RNA polymerase I (Pol I) complex consisting of 14 subunits.</text>
</comment>
<comment type="subcellular location">
    <subcellularLocation>
        <location evidence="1">Nucleus</location>
        <location evidence="1">Nucleolus</location>
    </subcellularLocation>
</comment>
<comment type="similarity">
    <text evidence="3">Belongs to the eukaryotic RPA49/POLR1E RNA polymerase subunit family.</text>
</comment>
<feature type="chain" id="PRO_0000073954" description="DNA-directed RNA polymerase I subunit rpa49">
    <location>
        <begin position="1"/>
        <end position="425"/>
    </location>
</feature>
<feature type="region of interest" description="Disordered" evidence="2">
    <location>
        <begin position="1"/>
        <end position="26"/>
    </location>
</feature>
<feature type="compositionally biased region" description="Basic and acidic residues" evidence="2">
    <location>
        <begin position="15"/>
        <end position="24"/>
    </location>
</feature>